<name>LEUD_CORGL</name>
<protein>
    <recommendedName>
        <fullName evidence="1">3-isopropylmalate dehydratase small subunit</fullName>
        <ecNumber evidence="1">4.2.1.33</ecNumber>
    </recommendedName>
    <alternativeName>
        <fullName evidence="1">Alpha-IPM isomerase</fullName>
        <shortName evidence="1">IPMI</shortName>
    </alternativeName>
    <alternativeName>
        <fullName evidence="1">Isopropylmalate isomerase</fullName>
    </alternativeName>
</protein>
<proteinExistence type="evidence at transcript level"/>
<accession>Q8NQV7</accession>
<keyword id="KW-0028">Amino-acid biosynthesis</keyword>
<keyword id="KW-0100">Branched-chain amino acid biosynthesis</keyword>
<keyword id="KW-0432">Leucine biosynthesis</keyword>
<keyword id="KW-0456">Lyase</keyword>
<keyword id="KW-1185">Reference proteome</keyword>
<comment type="function">
    <text evidence="1">Catalyzes the isomerization between 2-isopropylmalate and 3-isopropylmalate, via the formation of 2-isopropylmaleate.</text>
</comment>
<comment type="catalytic activity">
    <reaction evidence="1">
        <text>(2R,3S)-3-isopropylmalate = (2S)-2-isopropylmalate</text>
        <dbReference type="Rhea" id="RHEA:32287"/>
        <dbReference type="ChEBI" id="CHEBI:1178"/>
        <dbReference type="ChEBI" id="CHEBI:35121"/>
        <dbReference type="EC" id="4.2.1.33"/>
    </reaction>
</comment>
<comment type="pathway">
    <text evidence="1">Amino-acid biosynthesis; L-leucine biosynthesis; L-leucine from 3-methyl-2-oxobutanoate: step 2/4.</text>
</comment>
<comment type="subunit">
    <text evidence="1">Heterodimer of LeuC and LeuD.</text>
</comment>
<comment type="induction">
    <text evidence="2">Repressed by RipA.</text>
</comment>
<comment type="similarity">
    <text evidence="1">Belongs to the LeuD family. LeuD type 1 subfamily.</text>
</comment>
<dbReference type="EC" id="4.2.1.33" evidence="1"/>
<dbReference type="EMBL" id="BA000036">
    <property type="protein sequence ID" value="BAB98709.1"/>
    <property type="molecule type" value="Genomic_DNA"/>
</dbReference>
<dbReference type="EMBL" id="BX927151">
    <property type="protein sequence ID" value="CAF20015.1"/>
    <property type="molecule type" value="Genomic_DNA"/>
</dbReference>
<dbReference type="RefSeq" id="NP_600537.1">
    <property type="nucleotide sequence ID" value="NC_003450.3"/>
</dbReference>
<dbReference type="RefSeq" id="WP_011014282.1">
    <property type="nucleotide sequence ID" value="NC_006958.1"/>
</dbReference>
<dbReference type="SMR" id="Q8NQV7"/>
<dbReference type="STRING" id="196627.cg1488"/>
<dbReference type="GeneID" id="1019293"/>
<dbReference type="KEGG" id="cgb:cg1488"/>
<dbReference type="KEGG" id="cgl:Cgl1316"/>
<dbReference type="PATRIC" id="fig|196627.13.peg.1288"/>
<dbReference type="eggNOG" id="COG0066">
    <property type="taxonomic scope" value="Bacteria"/>
</dbReference>
<dbReference type="HOGENOM" id="CLU_081378_0_1_11"/>
<dbReference type="OrthoDB" id="9777465at2"/>
<dbReference type="BioCyc" id="CORYNE:G18NG-10894-MONOMER"/>
<dbReference type="UniPathway" id="UPA00048">
    <property type="reaction ID" value="UER00071"/>
</dbReference>
<dbReference type="Proteomes" id="UP000000582">
    <property type="component" value="Chromosome"/>
</dbReference>
<dbReference type="Proteomes" id="UP000001009">
    <property type="component" value="Chromosome"/>
</dbReference>
<dbReference type="GO" id="GO:0009316">
    <property type="term" value="C:3-isopropylmalate dehydratase complex"/>
    <property type="evidence" value="ECO:0007669"/>
    <property type="project" value="InterPro"/>
</dbReference>
<dbReference type="GO" id="GO:0003861">
    <property type="term" value="F:3-isopropylmalate dehydratase activity"/>
    <property type="evidence" value="ECO:0007669"/>
    <property type="project" value="UniProtKB-UniRule"/>
</dbReference>
<dbReference type="GO" id="GO:0009098">
    <property type="term" value="P:L-leucine biosynthetic process"/>
    <property type="evidence" value="ECO:0007669"/>
    <property type="project" value="UniProtKB-UniRule"/>
</dbReference>
<dbReference type="CDD" id="cd01577">
    <property type="entry name" value="IPMI_Swivel"/>
    <property type="match status" value="1"/>
</dbReference>
<dbReference type="FunFam" id="3.20.19.10:FF:000003">
    <property type="entry name" value="3-isopropylmalate dehydratase small subunit"/>
    <property type="match status" value="1"/>
</dbReference>
<dbReference type="Gene3D" id="3.20.19.10">
    <property type="entry name" value="Aconitase, domain 4"/>
    <property type="match status" value="1"/>
</dbReference>
<dbReference type="HAMAP" id="MF_01031">
    <property type="entry name" value="LeuD_type1"/>
    <property type="match status" value="1"/>
</dbReference>
<dbReference type="InterPro" id="IPR004431">
    <property type="entry name" value="3-IsopropMal_deHydase_ssu"/>
</dbReference>
<dbReference type="InterPro" id="IPR015928">
    <property type="entry name" value="Aconitase/3IPM_dehydase_swvl"/>
</dbReference>
<dbReference type="InterPro" id="IPR000573">
    <property type="entry name" value="AconitaseA/IPMdHydase_ssu_swvl"/>
</dbReference>
<dbReference type="InterPro" id="IPR033940">
    <property type="entry name" value="IPMI_Swivel"/>
</dbReference>
<dbReference type="InterPro" id="IPR050075">
    <property type="entry name" value="LeuD"/>
</dbReference>
<dbReference type="NCBIfam" id="TIGR00171">
    <property type="entry name" value="leuD"/>
    <property type="match status" value="1"/>
</dbReference>
<dbReference type="NCBIfam" id="NF002458">
    <property type="entry name" value="PRK01641.1"/>
    <property type="match status" value="1"/>
</dbReference>
<dbReference type="PANTHER" id="PTHR43345:SF5">
    <property type="entry name" value="3-ISOPROPYLMALATE DEHYDRATASE SMALL SUBUNIT"/>
    <property type="match status" value="1"/>
</dbReference>
<dbReference type="PANTHER" id="PTHR43345">
    <property type="entry name" value="3-ISOPROPYLMALATE DEHYDRATASE SMALL SUBUNIT 2-RELATED-RELATED"/>
    <property type="match status" value="1"/>
</dbReference>
<dbReference type="Pfam" id="PF00694">
    <property type="entry name" value="Aconitase_C"/>
    <property type="match status" value="1"/>
</dbReference>
<dbReference type="SUPFAM" id="SSF52016">
    <property type="entry name" value="LeuD/IlvD-like"/>
    <property type="match status" value="1"/>
</dbReference>
<feature type="chain" id="PRO_0000141815" description="3-isopropylmalate dehydratase small subunit">
    <location>
        <begin position="1"/>
        <end position="197"/>
    </location>
</feature>
<gene>
    <name evidence="1" type="primary">leuD</name>
    <name type="ordered locus">Cgl1316</name>
    <name type="ordered locus">cg1488</name>
</gene>
<reference key="1">
    <citation type="journal article" date="2003" name="Appl. Microbiol. Biotechnol.">
        <title>The Corynebacterium glutamicum genome: features and impacts on biotechnological processes.</title>
        <authorList>
            <person name="Ikeda M."/>
            <person name="Nakagawa S."/>
        </authorList>
    </citation>
    <scope>NUCLEOTIDE SEQUENCE [LARGE SCALE GENOMIC DNA]</scope>
    <source>
        <strain>ATCC 13032 / DSM 20300 / JCM 1318 / BCRC 11384 / CCUG 27702 / LMG 3730 / NBRC 12168 / NCIMB 10025 / NRRL B-2784 / 534</strain>
    </source>
</reference>
<reference key="2">
    <citation type="journal article" date="2003" name="J. Biotechnol.">
        <title>The complete Corynebacterium glutamicum ATCC 13032 genome sequence and its impact on the production of L-aspartate-derived amino acids and vitamins.</title>
        <authorList>
            <person name="Kalinowski J."/>
            <person name="Bathe B."/>
            <person name="Bartels D."/>
            <person name="Bischoff N."/>
            <person name="Bott M."/>
            <person name="Burkovski A."/>
            <person name="Dusch N."/>
            <person name="Eggeling L."/>
            <person name="Eikmanns B.J."/>
            <person name="Gaigalat L."/>
            <person name="Goesmann A."/>
            <person name="Hartmann M."/>
            <person name="Huthmacher K."/>
            <person name="Kraemer R."/>
            <person name="Linke B."/>
            <person name="McHardy A.C."/>
            <person name="Meyer F."/>
            <person name="Moeckel B."/>
            <person name="Pfefferle W."/>
            <person name="Puehler A."/>
            <person name="Rey D.A."/>
            <person name="Rueckert C."/>
            <person name="Rupp O."/>
            <person name="Sahm H."/>
            <person name="Wendisch V.F."/>
            <person name="Wiegraebe I."/>
            <person name="Tauch A."/>
        </authorList>
    </citation>
    <scope>NUCLEOTIDE SEQUENCE [LARGE SCALE GENOMIC DNA]</scope>
    <source>
        <strain>ATCC 13032 / DSM 20300 / JCM 1318 / BCRC 11384 / CCUG 27702 / LMG 3730 / NBRC 12168 / NCIMB 10025 / NRRL B-2784 / 534</strain>
    </source>
</reference>
<reference key="3">
    <citation type="journal article" date="2005" name="J. Biol. Chem.">
        <title>The AraC-type regulator RipA represses aconitase and other iron proteins from Corynebacterium under iron limitation and is itself repressed by DtxR.</title>
        <authorList>
            <person name="Wennerhold J."/>
            <person name="Krug A."/>
            <person name="Bott M."/>
        </authorList>
    </citation>
    <scope>INDUCTION</scope>
    <source>
        <strain>ATCC 13032 / DSM 20300 / JCM 1318 / BCRC 11384 / CCUG 27702 / LMG 3730 / NBRC 12168 / NCIMB 10025 / NRRL B-2784 / 534</strain>
    </source>
</reference>
<organism>
    <name type="scientific">Corynebacterium glutamicum (strain ATCC 13032 / DSM 20300 / JCM 1318 / BCRC 11384 / CCUG 27702 / LMG 3730 / NBRC 12168 / NCIMB 10025 / NRRL B-2784 / 534)</name>
    <dbReference type="NCBI Taxonomy" id="196627"/>
    <lineage>
        <taxon>Bacteria</taxon>
        <taxon>Bacillati</taxon>
        <taxon>Actinomycetota</taxon>
        <taxon>Actinomycetes</taxon>
        <taxon>Mycobacteriales</taxon>
        <taxon>Corynebacteriaceae</taxon>
        <taxon>Corynebacterium</taxon>
    </lineage>
</organism>
<evidence type="ECO:0000255" key="1">
    <source>
        <dbReference type="HAMAP-Rule" id="MF_01031"/>
    </source>
</evidence>
<evidence type="ECO:0000269" key="2">
    <source>
    </source>
</evidence>
<sequence>MEKFTTYTGVGVPLQRSNVDTDQIIPAVYLKRVTRTGFEDGLFSNWRQNDPNFVLNTDTYKNGSVLVAGPDFGTGSSREHAVWALMDYGFRAVFSSRFADIFRGNSGKAGMLTGIMEQSDIELLWKLMEQTPGLELTVNLEKQIVTAGDVVISFEVDPYIRWRLMEGLDDAGLTLRKLDEIEDYEAKRPAFKPRTNA</sequence>